<proteinExistence type="evidence at protein level"/>
<sequence length="158" mass="17686">MILFVGFLLMEIVMPQISRTALVPYSAEQMYQLVNDVQSYPQFLPGCTGSRILESTPGQMTAAVDVSKAGISKTFTTRNQLTSNQSILMSLVDGPFKKLIGGWKFTPLSQDACRIEFHLDFEFTNKLIELAFGRVFKELAANMVQAFTVRAKEVYSAR</sequence>
<comment type="function">
    <text evidence="1 2">Toxic component of a type II toxin-antitoxin (TA) system. Binds to 50S ribosomal subunits, preventing them from associating with 30S subunits to form 70S ribosomes (By similarity). In this strain of E.coli low levels of PasT complement operon disruption, however high levels are toxic; their effects are abrogated by high level expression of cognate antitoxin PasI. Plays a role in persistence after antibiotic exposure and survival of nitrosative stress; the toxic and persistence phenotypes are conferred by the same N-terminal region of the protein, while the stress resistance effects can be uncoupled from them in deletion mutants.</text>
</comment>
<comment type="subunit">
    <text evidence="1">Associates with 50S ribosomes.</text>
</comment>
<comment type="disruption phenotype">
    <text evidence="2">Deletion of the pasT-pasI operon yields a defective infection of mouse kidney but not bladder. On rich medium operon deletion decreases bacterial persistence after antibiotic exposure about 100-fold. Forms small colonies on rich medium. Delays growth on minimal medium supplemented with threonine, increased sensitivity to oxidative and nitrosative stress. Growth defects are complemented by low levels of PasT expression.</text>
</comment>
<comment type="miscellaneous">
    <text>This strain of E.coli has only 6 recognizable intact TA systems, whereas E.coli MG1655 strain K12 has at least 16. This may explain in part the differences between the 2 strains.</text>
</comment>
<comment type="similarity">
    <text evidence="3">Belongs to the ribosome association toxin RatA family.</text>
</comment>
<protein>
    <recommendedName>
        <fullName>Persistence and stress-resistance toxin PasT</fullName>
    </recommendedName>
    <alternativeName>
        <fullName>Ribosome association toxin RatA</fullName>
    </alternativeName>
</protein>
<feature type="chain" id="PRO_0000420800" description="Persistence and stress-resistance toxin PasT">
    <location>
        <begin position="1"/>
        <end position="158"/>
    </location>
</feature>
<feature type="region of interest" description="Required for resistance of nitrosative stress but not persistence or toxic effects">
    <location>
        <begin position="70"/>
        <end position="158"/>
    </location>
</feature>
<feature type="mutagenesis site" description="Loss of toxicity, no longer rescues persistence in disrupted mutants, but colonies are wild-type." evidence="2">
    <location>
        <begin position="1"/>
        <end position="9"/>
    </location>
</feature>
<organism>
    <name type="scientific">Escherichia coli O6:H1 (strain CFT073 / ATCC 700928 / UPEC)</name>
    <dbReference type="NCBI Taxonomy" id="199310"/>
    <lineage>
        <taxon>Bacteria</taxon>
        <taxon>Pseudomonadati</taxon>
        <taxon>Pseudomonadota</taxon>
        <taxon>Gammaproteobacteria</taxon>
        <taxon>Enterobacterales</taxon>
        <taxon>Enterobacteriaceae</taxon>
        <taxon>Escherichia</taxon>
    </lineage>
</organism>
<name>PAST_ECOL6</name>
<evidence type="ECO:0000250" key="1"/>
<evidence type="ECO:0000269" key="2">
    <source>
    </source>
</evidence>
<evidence type="ECO:0000305" key="3"/>
<accession>Q8FEY4</accession>
<dbReference type="EMBL" id="AE014075">
    <property type="protein sequence ID" value="AAN81591.1"/>
    <property type="molecule type" value="Genomic_DNA"/>
</dbReference>
<dbReference type="SMR" id="Q8FEY4"/>
<dbReference type="STRING" id="199310.c3141"/>
<dbReference type="KEGG" id="ecc:c3141"/>
<dbReference type="eggNOG" id="COG2867">
    <property type="taxonomic scope" value="Bacteria"/>
</dbReference>
<dbReference type="HOGENOM" id="CLU_079653_3_1_6"/>
<dbReference type="BioCyc" id="ECOL199310:C3141-MONOMER"/>
<dbReference type="Proteomes" id="UP000001410">
    <property type="component" value="Chromosome"/>
</dbReference>
<dbReference type="GO" id="GO:0048039">
    <property type="term" value="F:ubiquinone binding"/>
    <property type="evidence" value="ECO:0007669"/>
    <property type="project" value="InterPro"/>
</dbReference>
<dbReference type="GO" id="GO:0045333">
    <property type="term" value="P:cellular respiration"/>
    <property type="evidence" value="ECO:0007669"/>
    <property type="project" value="InterPro"/>
</dbReference>
<dbReference type="CDD" id="cd07813">
    <property type="entry name" value="COQ10p_like"/>
    <property type="match status" value="1"/>
</dbReference>
<dbReference type="FunFam" id="3.30.530.20:FF:000005">
    <property type="entry name" value="Type II toxin-antitoxin system toxin RatA"/>
    <property type="match status" value="1"/>
</dbReference>
<dbReference type="Gene3D" id="3.30.530.20">
    <property type="match status" value="1"/>
</dbReference>
<dbReference type="InterPro" id="IPR044996">
    <property type="entry name" value="COQ10-like"/>
</dbReference>
<dbReference type="InterPro" id="IPR005031">
    <property type="entry name" value="COQ10_START"/>
</dbReference>
<dbReference type="InterPro" id="IPR023393">
    <property type="entry name" value="START-like_dom_sf"/>
</dbReference>
<dbReference type="NCBIfam" id="NF007999">
    <property type="entry name" value="PRK10724.1"/>
    <property type="match status" value="1"/>
</dbReference>
<dbReference type="PANTHER" id="PTHR12901:SF10">
    <property type="entry name" value="COENZYME Q-BINDING PROTEIN COQ10, MITOCHONDRIAL"/>
    <property type="match status" value="1"/>
</dbReference>
<dbReference type="PANTHER" id="PTHR12901">
    <property type="entry name" value="SPERM PROTEIN HOMOLOG"/>
    <property type="match status" value="1"/>
</dbReference>
<dbReference type="Pfam" id="PF03364">
    <property type="entry name" value="Polyketide_cyc"/>
    <property type="match status" value="1"/>
</dbReference>
<dbReference type="SUPFAM" id="SSF55961">
    <property type="entry name" value="Bet v1-like"/>
    <property type="match status" value="1"/>
</dbReference>
<gene>
    <name type="primary">pasT</name>
    <name type="synonym">ratA</name>
    <name type="synonym">yfjG</name>
    <name type="ordered locus">c3141</name>
</gene>
<keyword id="KW-1185">Reference proteome</keyword>
<keyword id="KW-0346">Stress response</keyword>
<keyword id="KW-1277">Toxin-antitoxin system</keyword>
<reference key="1">
    <citation type="journal article" date="2002" name="Proc. Natl. Acad. Sci. U.S.A.">
        <title>Extensive mosaic structure revealed by the complete genome sequence of uropathogenic Escherichia coli.</title>
        <authorList>
            <person name="Welch R.A."/>
            <person name="Burland V."/>
            <person name="Plunkett G. III"/>
            <person name="Redford P."/>
            <person name="Roesch P."/>
            <person name="Rasko D."/>
            <person name="Buckles E.L."/>
            <person name="Liou S.-R."/>
            <person name="Boutin A."/>
            <person name="Hackett J."/>
            <person name="Stroud D."/>
            <person name="Mayhew G.F."/>
            <person name="Rose D.J."/>
            <person name="Zhou S."/>
            <person name="Schwartz D.C."/>
            <person name="Perna N.T."/>
            <person name="Mobley H.L.T."/>
            <person name="Donnenberg M.S."/>
            <person name="Blattner F.R."/>
        </authorList>
    </citation>
    <scope>NUCLEOTIDE SEQUENCE [LARGE SCALE GENOMIC DNA]</scope>
    <source>
        <strain>CFT073 / ATCC 700928 / UPEC</strain>
    </source>
</reference>
<reference key="2">
    <citation type="journal article" date="2012" name="PLoS Pathog.">
        <title>Toxin-antitoxin systems are important for niche-specific colonization and stress resistance of uropathogenic Escherichia coli.</title>
        <authorList>
            <person name="Norton J.P."/>
            <person name="Mulvey M.A."/>
        </authorList>
    </citation>
    <scope>FUNCTION AS A TOXIN</scope>
    <scope>ROLE IN STRESS RESPONSE</scope>
    <scope>DISRUPTION PHENOTYPE</scope>
    <scope>MUTAGENESIS OF 1-MET--LEU-9</scope>
    <source>
        <strain>CFT073 / ATCC 700928 / UPEC</strain>
    </source>
</reference>